<protein>
    <recommendedName>
        <fullName evidence="1">DNA-directed RNA polymerase subunit beta</fullName>
        <shortName evidence="1">RNAP subunit beta</shortName>
        <ecNumber evidence="1">2.7.7.6</ecNumber>
    </recommendedName>
    <alternativeName>
        <fullName evidence="1">RNA polymerase subunit beta</fullName>
    </alternativeName>
    <alternativeName>
        <fullName evidence="1">Transcriptase subunit beta</fullName>
    </alternativeName>
</protein>
<name>RPOB_STRP2</name>
<comment type="function">
    <text evidence="1">DNA-dependent RNA polymerase catalyzes the transcription of DNA into RNA using the four ribonucleoside triphosphates as substrates.</text>
</comment>
<comment type="catalytic activity">
    <reaction evidence="1">
        <text>RNA(n) + a ribonucleoside 5'-triphosphate = RNA(n+1) + diphosphate</text>
        <dbReference type="Rhea" id="RHEA:21248"/>
        <dbReference type="Rhea" id="RHEA-COMP:14527"/>
        <dbReference type="Rhea" id="RHEA-COMP:17342"/>
        <dbReference type="ChEBI" id="CHEBI:33019"/>
        <dbReference type="ChEBI" id="CHEBI:61557"/>
        <dbReference type="ChEBI" id="CHEBI:140395"/>
        <dbReference type="EC" id="2.7.7.6"/>
    </reaction>
</comment>
<comment type="subunit">
    <text evidence="1">The RNAP catalytic core consists of 2 alpha, 1 beta, 1 beta' and 1 omega subunit. When a sigma factor is associated with the core the holoenzyme is formed, which can initiate transcription.</text>
</comment>
<comment type="similarity">
    <text evidence="1">Belongs to the RNA polymerase beta chain family.</text>
</comment>
<organism>
    <name type="scientific">Streptococcus pneumoniae serotype 2 (strain D39 / NCTC 7466)</name>
    <dbReference type="NCBI Taxonomy" id="373153"/>
    <lineage>
        <taxon>Bacteria</taxon>
        <taxon>Bacillati</taxon>
        <taxon>Bacillota</taxon>
        <taxon>Bacilli</taxon>
        <taxon>Lactobacillales</taxon>
        <taxon>Streptococcaceae</taxon>
        <taxon>Streptococcus</taxon>
    </lineage>
</organism>
<dbReference type="EC" id="2.7.7.6" evidence="1"/>
<dbReference type="EMBL" id="CP000410">
    <property type="protein sequence ID" value="ABJ54731.1"/>
    <property type="molecule type" value="Genomic_DNA"/>
</dbReference>
<dbReference type="RefSeq" id="WP_000907145.1">
    <property type="nucleotide sequence ID" value="NZ_JAMLJR010000010.1"/>
</dbReference>
<dbReference type="SMR" id="Q04IK6"/>
<dbReference type="PaxDb" id="373153-SPD_1759"/>
<dbReference type="GeneID" id="45652826"/>
<dbReference type="KEGG" id="spd:SPD_1759"/>
<dbReference type="eggNOG" id="COG0085">
    <property type="taxonomic scope" value="Bacteria"/>
</dbReference>
<dbReference type="HOGENOM" id="CLU_000524_4_1_9"/>
<dbReference type="BioCyc" id="SPNE373153:G1G6V-1901-MONOMER"/>
<dbReference type="Proteomes" id="UP000001452">
    <property type="component" value="Chromosome"/>
</dbReference>
<dbReference type="GO" id="GO:0000428">
    <property type="term" value="C:DNA-directed RNA polymerase complex"/>
    <property type="evidence" value="ECO:0007669"/>
    <property type="project" value="UniProtKB-KW"/>
</dbReference>
<dbReference type="GO" id="GO:0003677">
    <property type="term" value="F:DNA binding"/>
    <property type="evidence" value="ECO:0007669"/>
    <property type="project" value="UniProtKB-UniRule"/>
</dbReference>
<dbReference type="GO" id="GO:0003899">
    <property type="term" value="F:DNA-directed RNA polymerase activity"/>
    <property type="evidence" value="ECO:0007669"/>
    <property type="project" value="UniProtKB-UniRule"/>
</dbReference>
<dbReference type="GO" id="GO:0032549">
    <property type="term" value="F:ribonucleoside binding"/>
    <property type="evidence" value="ECO:0007669"/>
    <property type="project" value="InterPro"/>
</dbReference>
<dbReference type="GO" id="GO:0006351">
    <property type="term" value="P:DNA-templated transcription"/>
    <property type="evidence" value="ECO:0007669"/>
    <property type="project" value="UniProtKB-UniRule"/>
</dbReference>
<dbReference type="CDD" id="cd00653">
    <property type="entry name" value="RNA_pol_B_RPB2"/>
    <property type="match status" value="1"/>
</dbReference>
<dbReference type="Gene3D" id="2.40.50.100">
    <property type="match status" value="1"/>
</dbReference>
<dbReference type="Gene3D" id="2.40.50.150">
    <property type="match status" value="1"/>
</dbReference>
<dbReference type="Gene3D" id="3.90.1100.10">
    <property type="match status" value="2"/>
</dbReference>
<dbReference type="Gene3D" id="2.30.150.10">
    <property type="entry name" value="DNA-directed RNA polymerase, beta subunit, external 1 domain"/>
    <property type="match status" value="1"/>
</dbReference>
<dbReference type="Gene3D" id="2.40.270.10">
    <property type="entry name" value="DNA-directed RNA polymerase, subunit 2, domain 6"/>
    <property type="match status" value="1"/>
</dbReference>
<dbReference type="Gene3D" id="3.90.1800.10">
    <property type="entry name" value="RNA polymerase alpha subunit dimerisation domain"/>
    <property type="match status" value="1"/>
</dbReference>
<dbReference type="Gene3D" id="3.90.1110.10">
    <property type="entry name" value="RNA polymerase Rpb2, domain 2"/>
    <property type="match status" value="1"/>
</dbReference>
<dbReference type="HAMAP" id="MF_01321">
    <property type="entry name" value="RNApol_bact_RpoB"/>
    <property type="match status" value="1"/>
</dbReference>
<dbReference type="InterPro" id="IPR042107">
    <property type="entry name" value="DNA-dir_RNA_pol_bsu_ext_1_sf"/>
</dbReference>
<dbReference type="InterPro" id="IPR019462">
    <property type="entry name" value="DNA-dir_RNA_pol_bsu_external_1"/>
</dbReference>
<dbReference type="InterPro" id="IPR015712">
    <property type="entry name" value="DNA-dir_RNA_pol_su2"/>
</dbReference>
<dbReference type="InterPro" id="IPR007120">
    <property type="entry name" value="DNA-dir_RNAP_su2_dom"/>
</dbReference>
<dbReference type="InterPro" id="IPR037033">
    <property type="entry name" value="DNA-dir_RNAP_su2_hyb_sf"/>
</dbReference>
<dbReference type="InterPro" id="IPR010243">
    <property type="entry name" value="RNA_pol_bsu_bac"/>
</dbReference>
<dbReference type="InterPro" id="IPR007121">
    <property type="entry name" value="RNA_pol_bsu_CS"/>
</dbReference>
<dbReference type="InterPro" id="IPR007644">
    <property type="entry name" value="RNA_pol_bsu_protrusion"/>
</dbReference>
<dbReference type="InterPro" id="IPR007642">
    <property type="entry name" value="RNA_pol_Rpb2_2"/>
</dbReference>
<dbReference type="InterPro" id="IPR037034">
    <property type="entry name" value="RNA_pol_Rpb2_2_sf"/>
</dbReference>
<dbReference type="InterPro" id="IPR007645">
    <property type="entry name" value="RNA_pol_Rpb2_3"/>
</dbReference>
<dbReference type="InterPro" id="IPR007641">
    <property type="entry name" value="RNA_pol_Rpb2_7"/>
</dbReference>
<dbReference type="InterPro" id="IPR014724">
    <property type="entry name" value="RNA_pol_RPB2_OB-fold"/>
</dbReference>
<dbReference type="NCBIfam" id="NF001616">
    <property type="entry name" value="PRK00405.1"/>
    <property type="match status" value="1"/>
</dbReference>
<dbReference type="NCBIfam" id="TIGR02013">
    <property type="entry name" value="rpoB"/>
    <property type="match status" value="1"/>
</dbReference>
<dbReference type="PANTHER" id="PTHR20856">
    <property type="entry name" value="DNA-DIRECTED RNA POLYMERASE I SUBUNIT 2"/>
    <property type="match status" value="1"/>
</dbReference>
<dbReference type="Pfam" id="PF04563">
    <property type="entry name" value="RNA_pol_Rpb2_1"/>
    <property type="match status" value="1"/>
</dbReference>
<dbReference type="Pfam" id="PF04561">
    <property type="entry name" value="RNA_pol_Rpb2_2"/>
    <property type="match status" value="2"/>
</dbReference>
<dbReference type="Pfam" id="PF04565">
    <property type="entry name" value="RNA_pol_Rpb2_3"/>
    <property type="match status" value="1"/>
</dbReference>
<dbReference type="Pfam" id="PF10385">
    <property type="entry name" value="RNA_pol_Rpb2_45"/>
    <property type="match status" value="1"/>
</dbReference>
<dbReference type="Pfam" id="PF00562">
    <property type="entry name" value="RNA_pol_Rpb2_6"/>
    <property type="match status" value="1"/>
</dbReference>
<dbReference type="Pfam" id="PF04560">
    <property type="entry name" value="RNA_pol_Rpb2_7"/>
    <property type="match status" value="1"/>
</dbReference>
<dbReference type="SUPFAM" id="SSF64484">
    <property type="entry name" value="beta and beta-prime subunits of DNA dependent RNA-polymerase"/>
    <property type="match status" value="1"/>
</dbReference>
<dbReference type="PROSITE" id="PS01166">
    <property type="entry name" value="RNA_POL_BETA"/>
    <property type="match status" value="1"/>
</dbReference>
<proteinExistence type="inferred from homology"/>
<sequence length="1203" mass="134318">MAGHDVQYGKHRTRRSFSRIKEVLDLPNLIEIQTDSFKAFLDHGLKEVFEDVLPISNFTDTMELEFVGYEIKEPKYTLEEARIHDASYSAPIFVTFRLINKETGEIKTQEVFFGDFPIMTEMGTFIINGGERIIVSQLVRSPGVYFNDKVDKNGKVGYGSTVIPNRGAWLELESDSKDITYTRIDRTRKIPFTTLVRALGFSGDDEIFDIFGDSELVRNTVEKDIHKNPMDSRTDEALKEIYERLRPGEPKTAESSRSLLVARFFDPRRYDLAAVGRYKINKKLNVKTRLLNQTIAEPLVDPETGEILVEAGTIMTRSVIESIESHLDGDLNKIVYIPNDAAVVTEPVVLQKFKVVAPTDPDRVVTIIGNANPDDKVRTVTPADILAEMSYFLNLAEGLGRVDDIDHLGNRRIRAVGELLANQVRLGLSRMERNVRERMSVQDNEVLTPQQIINIRPVTAAVKEFFGSSQLSQFMDQHNPLSELSHKRRLSALGPGGLTRDRAGYEVRDVHYTHYGRMCPIETPEGPNIGLINNLSSYGHLNKYGFVQTPYRKVDRETGVVTNEIVWLTADEEDEYTVAQANSRLNEDGTFAEKIVMGRHQGVNQEYPANIVDYMDVSPKQVVAVATACIPFLENDDSNRALMGANMQRQAVPLINPQAPYVGTGMEYQAAHDSGAAVIAQYDGKVTYADADKVEVRREDGSLDVYHIQKFRRSNSGTAYNQRTLVKVGDVVEKGDFIADGPSMENGEMALGQNPIVAYMTWEGYNFEDAVIMSERLVKDDVYTSVHLEEYESETRDTKLGPEEITREIPNVGEDALKDLDEMGIIRIGAEVKEGDILVGKVTPKGEKDLSAEERLLHAIFGDKSREVRDTSLRVPHGADGVVRDVKIFTRVNGDELQSGVNMLVRVYIAQKRKIKVGDKMAGRHGNKGVVSRIVPVEDMPYLPDGTPVDIMLNPLGVPSRMNIGQVMELHLGMAARTLGIHIATPVFDGASSEDLWSTVKEAGMDSDAKTILYDGRTGEPFDNRVSVGVMYMIKLHHMVDDKLHARSVGPYSTVTQQPLGGKAQFGGQRFGEMEVWALEAYGASNVLQEILTYKSDDINGRLKAYEAITKGKPIPKPGVPESFRVLVKELQSLGLDMRVLDEDDQEVELRDLDEGMDEDVIHVDDLEKAREKAAQEAKAAFEAEEAEKATKAEATEEAAEQE</sequence>
<reference key="1">
    <citation type="journal article" date="2007" name="J. Bacteriol.">
        <title>Genome sequence of Avery's virulent serotype 2 strain D39 of Streptococcus pneumoniae and comparison with that of unencapsulated laboratory strain R6.</title>
        <authorList>
            <person name="Lanie J.A."/>
            <person name="Ng W.-L."/>
            <person name="Kazmierczak K.M."/>
            <person name="Andrzejewski T.M."/>
            <person name="Davidsen T.M."/>
            <person name="Wayne K.J."/>
            <person name="Tettelin H."/>
            <person name="Glass J.I."/>
            <person name="Winkler M.E."/>
        </authorList>
    </citation>
    <scope>NUCLEOTIDE SEQUENCE [LARGE SCALE GENOMIC DNA]</scope>
    <source>
        <strain>D39 / NCTC 7466</strain>
    </source>
</reference>
<keyword id="KW-0240">DNA-directed RNA polymerase</keyword>
<keyword id="KW-0548">Nucleotidyltransferase</keyword>
<keyword id="KW-1185">Reference proteome</keyword>
<keyword id="KW-0804">Transcription</keyword>
<keyword id="KW-0808">Transferase</keyword>
<gene>
    <name evidence="1" type="primary">rpoB</name>
    <name type="ordered locus">SPD_1759</name>
</gene>
<accession>Q04IK6</accession>
<feature type="chain" id="PRO_0000300408" description="DNA-directed RNA polymerase subunit beta">
    <location>
        <begin position="1"/>
        <end position="1203"/>
    </location>
</feature>
<feature type="region of interest" description="Disordered" evidence="2">
    <location>
        <begin position="1174"/>
        <end position="1203"/>
    </location>
</feature>
<feature type="compositionally biased region" description="Basic and acidic residues" evidence="2">
    <location>
        <begin position="1174"/>
        <end position="1195"/>
    </location>
</feature>
<evidence type="ECO:0000255" key="1">
    <source>
        <dbReference type="HAMAP-Rule" id="MF_01321"/>
    </source>
</evidence>
<evidence type="ECO:0000256" key="2">
    <source>
        <dbReference type="SAM" id="MobiDB-lite"/>
    </source>
</evidence>